<evidence type="ECO:0000250" key="1"/>
<evidence type="ECO:0000255" key="2">
    <source>
        <dbReference type="PROSITE-ProRule" id="PRU00108"/>
    </source>
</evidence>
<evidence type="ECO:0000256" key="3">
    <source>
        <dbReference type="SAM" id="MobiDB-lite"/>
    </source>
</evidence>
<evidence type="ECO:0000305" key="4"/>
<comment type="function">
    <text evidence="1">Potential transcription factor that plays a central role during developmental processes.</text>
</comment>
<comment type="subcellular location">
    <subcellularLocation>
        <location evidence="2">Nucleus</location>
    </subcellularLocation>
</comment>
<comment type="similarity">
    <text evidence="4">Belongs to the WUS homeobox family.</text>
</comment>
<keyword id="KW-0217">Developmental protein</keyword>
<keyword id="KW-0238">DNA-binding</keyword>
<keyword id="KW-0371">Homeobox</keyword>
<keyword id="KW-0539">Nucleus</keyword>
<keyword id="KW-1185">Reference proteome</keyword>
<keyword id="KW-0804">Transcription</keyword>
<keyword id="KW-0805">Transcription regulation</keyword>
<name>WOX7_ARATH</name>
<gene>
    <name type="primary">WOX7</name>
    <name type="ordered locus">At5g05770</name>
    <name type="ORF">MJJ3.18</name>
</gene>
<feature type="chain" id="PRO_0000049374" description="WUSCHEL-related homeobox 7">
    <location>
        <begin position="1"/>
        <end position="122"/>
    </location>
</feature>
<feature type="DNA-binding region" description="Homeobox; WUS-type" evidence="2">
    <location>
        <begin position="25"/>
        <end position="89"/>
    </location>
</feature>
<feature type="region of interest" description="Disordered" evidence="3">
    <location>
        <begin position="98"/>
        <end position="122"/>
    </location>
</feature>
<feature type="compositionally biased region" description="Basic and acidic residues" evidence="3">
    <location>
        <begin position="98"/>
        <end position="111"/>
    </location>
</feature>
<feature type="compositionally biased region" description="Basic residues" evidence="3">
    <location>
        <begin position="112"/>
        <end position="122"/>
    </location>
</feature>
<protein>
    <recommendedName>
        <fullName>WUSCHEL-related homeobox 7</fullName>
    </recommendedName>
</protein>
<accession>Q9FFK0</accession>
<accession>C0SVN6</accession>
<reference key="1">
    <citation type="journal article" date="1997" name="DNA Res.">
        <title>Structural analysis of Arabidopsis thaliana chromosome 5. I. Sequence features of the 1.6 Mb regions covered by twenty physically assigned P1 clones.</title>
        <authorList>
            <person name="Sato S."/>
            <person name="Kotani H."/>
            <person name="Nakamura Y."/>
            <person name="Kaneko T."/>
            <person name="Asamizu E."/>
            <person name="Fukami M."/>
            <person name="Miyajima N."/>
            <person name="Tabata S."/>
        </authorList>
    </citation>
    <scope>NUCLEOTIDE SEQUENCE [LARGE SCALE GENOMIC DNA]</scope>
    <source>
        <strain>cv. Columbia</strain>
    </source>
</reference>
<reference key="2">
    <citation type="journal article" date="2017" name="Plant J.">
        <title>Araport11: a complete reannotation of the Arabidopsis thaliana reference genome.</title>
        <authorList>
            <person name="Cheng C.Y."/>
            <person name="Krishnakumar V."/>
            <person name="Chan A.P."/>
            <person name="Thibaud-Nissen F."/>
            <person name="Schobel S."/>
            <person name="Town C.D."/>
        </authorList>
    </citation>
    <scope>GENOME REANNOTATION</scope>
    <source>
        <strain>cv. Columbia</strain>
    </source>
</reference>
<reference key="3">
    <citation type="submission" date="2009-03" db="EMBL/GenBank/DDBJ databases">
        <title>ORF cloning and analysis of Arabidopsis transcription factor genes.</title>
        <authorList>
            <person name="Fujita M."/>
            <person name="Mizukado S."/>
            <person name="Seki M."/>
            <person name="Shinozaki K."/>
            <person name="Mitsuda N."/>
            <person name="Takiguchi Y."/>
            <person name="Takagi M."/>
        </authorList>
    </citation>
    <scope>NUCLEOTIDE SEQUENCE [LARGE SCALE MRNA]</scope>
</reference>
<reference key="4">
    <citation type="journal article" date="2004" name="Development">
        <title>Expression dynamics of WOX genes mark cell fate decisions during early embryonic patterning in Arabidopsis thaliana.</title>
        <authorList>
            <person name="Haecker A."/>
            <person name="Gross-Hardt R."/>
            <person name="Geiges B."/>
            <person name="Sarkar A."/>
            <person name="Breuninger H."/>
            <person name="Herrmann M."/>
            <person name="Laux T."/>
        </authorList>
    </citation>
    <scope>IDENTIFICATION</scope>
</reference>
<sequence>MSSRGFNIKARGLCNNNNGGGGTGAKCGRWNPTVEQVKLLTDLFKAGLRTPSTDQIQKISMELSFYGKIESKNVFYWFQNHKARERQKCRKISTVKFDHRQDTDLSKPRRDNVRRHQLPAKG</sequence>
<proteinExistence type="evidence at transcript level"/>
<organism>
    <name type="scientific">Arabidopsis thaliana</name>
    <name type="common">Mouse-ear cress</name>
    <dbReference type="NCBI Taxonomy" id="3702"/>
    <lineage>
        <taxon>Eukaryota</taxon>
        <taxon>Viridiplantae</taxon>
        <taxon>Streptophyta</taxon>
        <taxon>Embryophyta</taxon>
        <taxon>Tracheophyta</taxon>
        <taxon>Spermatophyta</taxon>
        <taxon>Magnoliopsida</taxon>
        <taxon>eudicotyledons</taxon>
        <taxon>Gunneridae</taxon>
        <taxon>Pentapetalae</taxon>
        <taxon>rosids</taxon>
        <taxon>malvids</taxon>
        <taxon>Brassicales</taxon>
        <taxon>Brassicaceae</taxon>
        <taxon>Camelineae</taxon>
        <taxon>Arabidopsis</taxon>
    </lineage>
</organism>
<dbReference type="EMBL" id="AB005237">
    <property type="protein sequence ID" value="BAB09671.1"/>
    <property type="molecule type" value="Genomic_DNA"/>
</dbReference>
<dbReference type="EMBL" id="CP002688">
    <property type="protein sequence ID" value="AED90922.1"/>
    <property type="molecule type" value="Genomic_DNA"/>
</dbReference>
<dbReference type="EMBL" id="AB493739">
    <property type="protein sequence ID" value="BAH30577.1"/>
    <property type="molecule type" value="mRNA"/>
</dbReference>
<dbReference type="RefSeq" id="NP_196196.1">
    <property type="nucleotide sequence ID" value="NM_120659.2"/>
</dbReference>
<dbReference type="SMR" id="Q9FFK0"/>
<dbReference type="BioGRID" id="15741">
    <property type="interactions" value="2"/>
</dbReference>
<dbReference type="FunCoup" id="Q9FFK0">
    <property type="interactions" value="4"/>
</dbReference>
<dbReference type="IntAct" id="Q9FFK0">
    <property type="interactions" value="2"/>
</dbReference>
<dbReference type="STRING" id="3702.Q9FFK0"/>
<dbReference type="PaxDb" id="3702-AT5G05770.1"/>
<dbReference type="EnsemblPlants" id="AT5G05770.1">
    <property type="protein sequence ID" value="AT5G05770.1"/>
    <property type="gene ID" value="AT5G05770"/>
</dbReference>
<dbReference type="GeneID" id="830462"/>
<dbReference type="Gramene" id="AT5G05770.1">
    <property type="protein sequence ID" value="AT5G05770.1"/>
    <property type="gene ID" value="AT5G05770"/>
</dbReference>
<dbReference type="KEGG" id="ath:AT5G05770"/>
<dbReference type="Araport" id="AT5G05770"/>
<dbReference type="TAIR" id="AT5G05770">
    <property type="gene designation" value="WOX7"/>
</dbReference>
<dbReference type="eggNOG" id="ENOG502RYVY">
    <property type="taxonomic scope" value="Eukaryota"/>
</dbReference>
<dbReference type="HOGENOM" id="CLU_2029894_0_0_1"/>
<dbReference type="InParanoid" id="Q9FFK0"/>
<dbReference type="OMA" id="TATSHNE"/>
<dbReference type="OrthoDB" id="1845355at2759"/>
<dbReference type="PhylomeDB" id="Q9FFK0"/>
<dbReference type="PRO" id="PR:Q9FFK0"/>
<dbReference type="Proteomes" id="UP000006548">
    <property type="component" value="Chromosome 5"/>
</dbReference>
<dbReference type="ExpressionAtlas" id="Q9FFK0">
    <property type="expression patterns" value="baseline and differential"/>
</dbReference>
<dbReference type="GO" id="GO:0005634">
    <property type="term" value="C:nucleus"/>
    <property type="evidence" value="ECO:0007669"/>
    <property type="project" value="UniProtKB-SubCell"/>
</dbReference>
<dbReference type="GO" id="GO:0003677">
    <property type="term" value="F:DNA binding"/>
    <property type="evidence" value="ECO:0007669"/>
    <property type="project" value="UniProtKB-KW"/>
</dbReference>
<dbReference type="GO" id="GO:0003700">
    <property type="term" value="F:DNA-binding transcription factor activity"/>
    <property type="evidence" value="ECO:0000250"/>
    <property type="project" value="TAIR"/>
</dbReference>
<dbReference type="GO" id="GO:0099402">
    <property type="term" value="P:plant organ development"/>
    <property type="evidence" value="ECO:0007669"/>
    <property type="project" value="InterPro"/>
</dbReference>
<dbReference type="CDD" id="cd00086">
    <property type="entry name" value="homeodomain"/>
    <property type="match status" value="1"/>
</dbReference>
<dbReference type="FunFam" id="1.10.10.60:FF:000118">
    <property type="entry name" value="WUSCHEL-related homeobox 11"/>
    <property type="match status" value="1"/>
</dbReference>
<dbReference type="Gene3D" id="1.10.10.60">
    <property type="entry name" value="Homeodomain-like"/>
    <property type="match status" value="1"/>
</dbReference>
<dbReference type="InterPro" id="IPR001356">
    <property type="entry name" value="HD"/>
</dbReference>
<dbReference type="InterPro" id="IPR009057">
    <property type="entry name" value="Homeodomain-like_sf"/>
</dbReference>
<dbReference type="InterPro" id="IPR044555">
    <property type="entry name" value="WUSCHEL-like"/>
</dbReference>
<dbReference type="PANTHER" id="PTHR45940">
    <property type="entry name" value="WUSCHEL-RELATED HOMEOBOX 1-RELATED"/>
    <property type="match status" value="1"/>
</dbReference>
<dbReference type="PANTHER" id="PTHR45940:SF3">
    <property type="entry name" value="WUSCHEL-RELATED HOMEOBOX 7"/>
    <property type="match status" value="1"/>
</dbReference>
<dbReference type="Pfam" id="PF00046">
    <property type="entry name" value="Homeodomain"/>
    <property type="match status" value="1"/>
</dbReference>
<dbReference type="SMART" id="SM00389">
    <property type="entry name" value="HOX"/>
    <property type="match status" value="1"/>
</dbReference>
<dbReference type="SUPFAM" id="SSF46689">
    <property type="entry name" value="Homeodomain-like"/>
    <property type="match status" value="1"/>
</dbReference>
<dbReference type="PROSITE" id="PS50071">
    <property type="entry name" value="HOMEOBOX_2"/>
    <property type="match status" value="1"/>
</dbReference>